<comment type="function">
    <text evidence="1">Catalyzes the conversion of dethiobiotin (DTB) to biotin by the insertion of a sulfur atom into dethiobiotin via a radical-based mechanism.</text>
</comment>
<comment type="catalytic activity">
    <reaction evidence="1">
        <text>(4R,5S)-dethiobiotin + (sulfur carrier)-SH + 2 reduced [2Fe-2S]-[ferredoxin] + 2 S-adenosyl-L-methionine = (sulfur carrier)-H + biotin + 2 5'-deoxyadenosine + 2 L-methionine + 2 oxidized [2Fe-2S]-[ferredoxin]</text>
        <dbReference type="Rhea" id="RHEA:22060"/>
        <dbReference type="Rhea" id="RHEA-COMP:10000"/>
        <dbReference type="Rhea" id="RHEA-COMP:10001"/>
        <dbReference type="Rhea" id="RHEA-COMP:14737"/>
        <dbReference type="Rhea" id="RHEA-COMP:14739"/>
        <dbReference type="ChEBI" id="CHEBI:17319"/>
        <dbReference type="ChEBI" id="CHEBI:29917"/>
        <dbReference type="ChEBI" id="CHEBI:33737"/>
        <dbReference type="ChEBI" id="CHEBI:33738"/>
        <dbReference type="ChEBI" id="CHEBI:57586"/>
        <dbReference type="ChEBI" id="CHEBI:57844"/>
        <dbReference type="ChEBI" id="CHEBI:59789"/>
        <dbReference type="ChEBI" id="CHEBI:64428"/>
        <dbReference type="ChEBI" id="CHEBI:149473"/>
        <dbReference type="EC" id="2.8.1.6"/>
    </reaction>
</comment>
<comment type="cofactor">
    <cofactor evidence="1">
        <name>[4Fe-4S] cluster</name>
        <dbReference type="ChEBI" id="CHEBI:49883"/>
    </cofactor>
    <text evidence="1">Binds 1 [4Fe-4S] cluster. The cluster is coordinated with 3 cysteines and an exchangeable S-adenosyl-L-methionine.</text>
</comment>
<comment type="cofactor">
    <cofactor evidence="1">
        <name>[2Fe-2S] cluster</name>
        <dbReference type="ChEBI" id="CHEBI:190135"/>
    </cofactor>
    <text evidence="1">Binds 1 [2Fe-2S] cluster. The cluster is coordinated with 3 cysteines and 1 arginine.</text>
</comment>
<comment type="pathway">
    <text evidence="1">Cofactor biosynthesis; biotin biosynthesis; biotin from 7,8-diaminononanoate: step 2/2.</text>
</comment>
<comment type="subunit">
    <text evidence="1">Homodimer.</text>
</comment>
<comment type="similarity">
    <text evidence="1">Belongs to the radical SAM superfamily. Biotin synthase family.</text>
</comment>
<protein>
    <recommendedName>
        <fullName evidence="1">Biotin synthase</fullName>
        <ecNumber evidence="1">2.8.1.6</ecNumber>
    </recommendedName>
</protein>
<gene>
    <name evidence="1" type="primary">bioB</name>
    <name type="ordered locus">AM969</name>
</gene>
<proteinExistence type="inferred from homology"/>
<dbReference type="EC" id="2.8.1.6" evidence="1"/>
<dbReference type="EMBL" id="CP000030">
    <property type="protein sequence ID" value="AAV86866.1"/>
    <property type="molecule type" value="Genomic_DNA"/>
</dbReference>
<dbReference type="RefSeq" id="WP_010265738.1">
    <property type="nucleotide sequence ID" value="NZ_AFMU01000050.1"/>
</dbReference>
<dbReference type="SMR" id="Q5PA14"/>
<dbReference type="GeneID" id="7397922"/>
<dbReference type="KEGG" id="ama:AM969"/>
<dbReference type="HOGENOM" id="CLU_033172_1_2_5"/>
<dbReference type="UniPathway" id="UPA00078">
    <property type="reaction ID" value="UER00162"/>
</dbReference>
<dbReference type="GO" id="GO:0051537">
    <property type="term" value="F:2 iron, 2 sulfur cluster binding"/>
    <property type="evidence" value="ECO:0007669"/>
    <property type="project" value="UniProtKB-KW"/>
</dbReference>
<dbReference type="GO" id="GO:0051539">
    <property type="term" value="F:4 iron, 4 sulfur cluster binding"/>
    <property type="evidence" value="ECO:0007669"/>
    <property type="project" value="UniProtKB-KW"/>
</dbReference>
<dbReference type="GO" id="GO:0004076">
    <property type="term" value="F:biotin synthase activity"/>
    <property type="evidence" value="ECO:0007669"/>
    <property type="project" value="UniProtKB-UniRule"/>
</dbReference>
<dbReference type="GO" id="GO:0005506">
    <property type="term" value="F:iron ion binding"/>
    <property type="evidence" value="ECO:0007669"/>
    <property type="project" value="UniProtKB-UniRule"/>
</dbReference>
<dbReference type="GO" id="GO:0009102">
    <property type="term" value="P:biotin biosynthetic process"/>
    <property type="evidence" value="ECO:0007669"/>
    <property type="project" value="UniProtKB-UniRule"/>
</dbReference>
<dbReference type="CDD" id="cd01335">
    <property type="entry name" value="Radical_SAM"/>
    <property type="match status" value="1"/>
</dbReference>
<dbReference type="Gene3D" id="3.20.20.70">
    <property type="entry name" value="Aldolase class I"/>
    <property type="match status" value="1"/>
</dbReference>
<dbReference type="HAMAP" id="MF_01694">
    <property type="entry name" value="BioB"/>
    <property type="match status" value="1"/>
</dbReference>
<dbReference type="InterPro" id="IPR013785">
    <property type="entry name" value="Aldolase_TIM"/>
</dbReference>
<dbReference type="InterPro" id="IPR010722">
    <property type="entry name" value="BATS_dom"/>
</dbReference>
<dbReference type="InterPro" id="IPR002684">
    <property type="entry name" value="Biotin_synth/BioAB"/>
</dbReference>
<dbReference type="InterPro" id="IPR024177">
    <property type="entry name" value="Biotin_synthase"/>
</dbReference>
<dbReference type="InterPro" id="IPR006638">
    <property type="entry name" value="Elp3/MiaA/NifB-like_rSAM"/>
</dbReference>
<dbReference type="InterPro" id="IPR007197">
    <property type="entry name" value="rSAM"/>
</dbReference>
<dbReference type="NCBIfam" id="TIGR00433">
    <property type="entry name" value="bioB"/>
    <property type="match status" value="1"/>
</dbReference>
<dbReference type="PANTHER" id="PTHR22976">
    <property type="entry name" value="BIOTIN SYNTHASE"/>
    <property type="match status" value="1"/>
</dbReference>
<dbReference type="PANTHER" id="PTHR22976:SF2">
    <property type="entry name" value="BIOTIN SYNTHASE, MITOCHONDRIAL"/>
    <property type="match status" value="1"/>
</dbReference>
<dbReference type="Pfam" id="PF06968">
    <property type="entry name" value="BATS"/>
    <property type="match status" value="1"/>
</dbReference>
<dbReference type="Pfam" id="PF04055">
    <property type="entry name" value="Radical_SAM"/>
    <property type="match status" value="1"/>
</dbReference>
<dbReference type="PIRSF" id="PIRSF001619">
    <property type="entry name" value="Biotin_synth"/>
    <property type="match status" value="1"/>
</dbReference>
<dbReference type="SFLD" id="SFLDF00272">
    <property type="entry name" value="biotin_synthase"/>
    <property type="match status" value="1"/>
</dbReference>
<dbReference type="SFLD" id="SFLDG01278">
    <property type="entry name" value="biotin_synthase_like"/>
    <property type="match status" value="1"/>
</dbReference>
<dbReference type="SMART" id="SM00876">
    <property type="entry name" value="BATS"/>
    <property type="match status" value="1"/>
</dbReference>
<dbReference type="SMART" id="SM00729">
    <property type="entry name" value="Elp3"/>
    <property type="match status" value="1"/>
</dbReference>
<dbReference type="SUPFAM" id="SSF102114">
    <property type="entry name" value="Radical SAM enzymes"/>
    <property type="match status" value="1"/>
</dbReference>
<dbReference type="PROSITE" id="PS51918">
    <property type="entry name" value="RADICAL_SAM"/>
    <property type="match status" value="1"/>
</dbReference>
<reference key="1">
    <citation type="journal article" date="2005" name="Proc. Natl. Acad. Sci. U.S.A.">
        <title>Complete genome sequencing of Anaplasma marginale reveals that the surface is skewed to two superfamilies of outer membrane proteins.</title>
        <authorList>
            <person name="Brayton K.A."/>
            <person name="Kappmeyer L.S."/>
            <person name="Herndon D.R."/>
            <person name="Dark M.J."/>
            <person name="Tibbals D.L."/>
            <person name="Palmer G.H."/>
            <person name="McGuire T.C."/>
            <person name="Knowles D.P. Jr."/>
        </authorList>
    </citation>
    <scope>NUCLEOTIDE SEQUENCE [LARGE SCALE GENOMIC DNA]</scope>
    <source>
        <strain>St. Maries</strain>
    </source>
</reference>
<keyword id="KW-0001">2Fe-2S</keyword>
<keyword id="KW-0004">4Fe-4S</keyword>
<keyword id="KW-0093">Biotin biosynthesis</keyword>
<keyword id="KW-0408">Iron</keyword>
<keyword id="KW-0411">Iron-sulfur</keyword>
<keyword id="KW-0479">Metal-binding</keyword>
<keyword id="KW-0949">S-adenosyl-L-methionine</keyword>
<keyword id="KW-0808">Transferase</keyword>
<sequence length="324" mass="36039">MIRNNWTLEEALELFRMPFSDLILKAHSVHVQNFRNNEVQVAALMNIKTGSCPENCRYCAQSAHYNTGLEKKSLSTVEEVKTAAKRAKEIGADRFCFAAAWRNLHDRDLEKICQFVEAIKSEGLESCASLGMLKLDQAQKLKESGLDFYNHNVDTSREFYHNVVTTRTYEERLETVRNVQQAGIKVCCGGILGMGESTEDRASMLVTLANLEQHPLSVPINRLVPIEGTPMEGNPKIDNIDFVRTIAVARIMMPASYVRLAAGRGEMSEEMQALCMLAGANSIFCGEKLLTTPNARPEDDQRLFSQLGITPSRAACTTSDAQLA</sequence>
<organism>
    <name type="scientific">Anaplasma marginale (strain St. Maries)</name>
    <dbReference type="NCBI Taxonomy" id="234826"/>
    <lineage>
        <taxon>Bacteria</taxon>
        <taxon>Pseudomonadati</taxon>
        <taxon>Pseudomonadota</taxon>
        <taxon>Alphaproteobacteria</taxon>
        <taxon>Rickettsiales</taxon>
        <taxon>Anaplasmataceae</taxon>
        <taxon>Anaplasma</taxon>
    </lineage>
</organism>
<evidence type="ECO:0000255" key="1">
    <source>
        <dbReference type="HAMAP-Rule" id="MF_01694"/>
    </source>
</evidence>
<evidence type="ECO:0000255" key="2">
    <source>
        <dbReference type="PROSITE-ProRule" id="PRU01266"/>
    </source>
</evidence>
<name>BIOB_ANAMM</name>
<feature type="chain" id="PRO_0000381199" description="Biotin synthase">
    <location>
        <begin position="1"/>
        <end position="324"/>
    </location>
</feature>
<feature type="domain" description="Radical SAM core" evidence="2">
    <location>
        <begin position="37"/>
        <end position="264"/>
    </location>
</feature>
<feature type="binding site" evidence="1">
    <location>
        <position position="52"/>
    </location>
    <ligand>
        <name>[4Fe-4S] cluster</name>
        <dbReference type="ChEBI" id="CHEBI:49883"/>
        <note>4Fe-4S-S-AdoMet</note>
    </ligand>
</feature>
<feature type="binding site" evidence="1">
    <location>
        <position position="56"/>
    </location>
    <ligand>
        <name>[4Fe-4S] cluster</name>
        <dbReference type="ChEBI" id="CHEBI:49883"/>
        <note>4Fe-4S-S-AdoMet</note>
    </ligand>
</feature>
<feature type="binding site" evidence="1">
    <location>
        <position position="59"/>
    </location>
    <ligand>
        <name>[4Fe-4S] cluster</name>
        <dbReference type="ChEBI" id="CHEBI:49883"/>
        <note>4Fe-4S-S-AdoMet</note>
    </ligand>
</feature>
<feature type="binding site" evidence="1">
    <location>
        <position position="96"/>
    </location>
    <ligand>
        <name>[2Fe-2S] cluster</name>
        <dbReference type="ChEBI" id="CHEBI:190135"/>
    </ligand>
</feature>
<feature type="binding site" evidence="1">
    <location>
        <position position="127"/>
    </location>
    <ligand>
        <name>[2Fe-2S] cluster</name>
        <dbReference type="ChEBI" id="CHEBI:190135"/>
    </ligand>
</feature>
<feature type="binding site" evidence="1">
    <location>
        <position position="187"/>
    </location>
    <ligand>
        <name>[2Fe-2S] cluster</name>
        <dbReference type="ChEBI" id="CHEBI:190135"/>
    </ligand>
</feature>
<feature type="binding site" evidence="1">
    <location>
        <position position="259"/>
    </location>
    <ligand>
        <name>[2Fe-2S] cluster</name>
        <dbReference type="ChEBI" id="CHEBI:190135"/>
    </ligand>
</feature>
<accession>Q5PA14</accession>